<accession>A1T8V0</accession>
<feature type="chain" id="PRO_0000381489" description="Biotin synthase">
    <location>
        <begin position="1"/>
        <end position="331"/>
    </location>
</feature>
<feature type="domain" description="Radical SAM core" evidence="2">
    <location>
        <begin position="52"/>
        <end position="277"/>
    </location>
</feature>
<feature type="binding site" evidence="1">
    <location>
        <position position="67"/>
    </location>
    <ligand>
        <name>[4Fe-4S] cluster</name>
        <dbReference type="ChEBI" id="CHEBI:49883"/>
        <note>4Fe-4S-S-AdoMet</note>
    </ligand>
</feature>
<feature type="binding site" evidence="1">
    <location>
        <position position="71"/>
    </location>
    <ligand>
        <name>[4Fe-4S] cluster</name>
        <dbReference type="ChEBI" id="CHEBI:49883"/>
        <note>4Fe-4S-S-AdoMet</note>
    </ligand>
</feature>
<feature type="binding site" evidence="1">
    <location>
        <position position="74"/>
    </location>
    <ligand>
        <name>[4Fe-4S] cluster</name>
        <dbReference type="ChEBI" id="CHEBI:49883"/>
        <note>4Fe-4S-S-AdoMet</note>
    </ligand>
</feature>
<feature type="binding site" evidence="1">
    <location>
        <position position="110"/>
    </location>
    <ligand>
        <name>[2Fe-2S] cluster</name>
        <dbReference type="ChEBI" id="CHEBI:190135"/>
    </ligand>
</feature>
<feature type="binding site" evidence="1">
    <location>
        <position position="143"/>
    </location>
    <ligand>
        <name>[2Fe-2S] cluster</name>
        <dbReference type="ChEBI" id="CHEBI:190135"/>
    </ligand>
</feature>
<feature type="binding site" evidence="1">
    <location>
        <position position="202"/>
    </location>
    <ligand>
        <name>[2Fe-2S] cluster</name>
        <dbReference type="ChEBI" id="CHEBI:190135"/>
    </ligand>
</feature>
<feature type="binding site" evidence="1">
    <location>
        <position position="272"/>
    </location>
    <ligand>
        <name>[2Fe-2S] cluster</name>
        <dbReference type="ChEBI" id="CHEBI:190135"/>
    </ligand>
</feature>
<comment type="function">
    <text evidence="1">Catalyzes the conversion of dethiobiotin (DTB) to biotin by the insertion of a sulfur atom into dethiobiotin via a radical-based mechanism.</text>
</comment>
<comment type="catalytic activity">
    <reaction evidence="1">
        <text>(4R,5S)-dethiobiotin + (sulfur carrier)-SH + 2 reduced [2Fe-2S]-[ferredoxin] + 2 S-adenosyl-L-methionine = (sulfur carrier)-H + biotin + 2 5'-deoxyadenosine + 2 L-methionine + 2 oxidized [2Fe-2S]-[ferredoxin]</text>
        <dbReference type="Rhea" id="RHEA:22060"/>
        <dbReference type="Rhea" id="RHEA-COMP:10000"/>
        <dbReference type="Rhea" id="RHEA-COMP:10001"/>
        <dbReference type="Rhea" id="RHEA-COMP:14737"/>
        <dbReference type="Rhea" id="RHEA-COMP:14739"/>
        <dbReference type="ChEBI" id="CHEBI:17319"/>
        <dbReference type="ChEBI" id="CHEBI:29917"/>
        <dbReference type="ChEBI" id="CHEBI:33737"/>
        <dbReference type="ChEBI" id="CHEBI:33738"/>
        <dbReference type="ChEBI" id="CHEBI:57586"/>
        <dbReference type="ChEBI" id="CHEBI:57844"/>
        <dbReference type="ChEBI" id="CHEBI:59789"/>
        <dbReference type="ChEBI" id="CHEBI:64428"/>
        <dbReference type="ChEBI" id="CHEBI:149473"/>
        <dbReference type="EC" id="2.8.1.6"/>
    </reaction>
</comment>
<comment type="cofactor">
    <cofactor evidence="1">
        <name>[4Fe-4S] cluster</name>
        <dbReference type="ChEBI" id="CHEBI:49883"/>
    </cofactor>
    <text evidence="1">Binds 1 [4Fe-4S] cluster. The cluster is coordinated with 3 cysteines and an exchangeable S-adenosyl-L-methionine.</text>
</comment>
<comment type="cofactor">
    <cofactor evidence="1">
        <name>[2Fe-2S] cluster</name>
        <dbReference type="ChEBI" id="CHEBI:190135"/>
    </cofactor>
    <text evidence="1">Binds 1 [2Fe-2S] cluster. The cluster is coordinated with 3 cysteines and 1 arginine.</text>
</comment>
<comment type="pathway">
    <text evidence="1">Cofactor biosynthesis; biotin biosynthesis; biotin from 7,8-diaminononanoate: step 2/2.</text>
</comment>
<comment type="subunit">
    <text evidence="1">Homodimer.</text>
</comment>
<comment type="similarity">
    <text evidence="1">Belongs to the radical SAM superfamily. Biotin synthase family.</text>
</comment>
<reference key="1">
    <citation type="submission" date="2006-12" db="EMBL/GenBank/DDBJ databases">
        <title>Complete sequence of Mycobacterium vanbaalenii PYR-1.</title>
        <authorList>
            <consortium name="US DOE Joint Genome Institute"/>
            <person name="Copeland A."/>
            <person name="Lucas S."/>
            <person name="Lapidus A."/>
            <person name="Barry K."/>
            <person name="Detter J.C."/>
            <person name="Glavina del Rio T."/>
            <person name="Hammon N."/>
            <person name="Israni S."/>
            <person name="Dalin E."/>
            <person name="Tice H."/>
            <person name="Pitluck S."/>
            <person name="Singan V."/>
            <person name="Schmutz J."/>
            <person name="Larimer F."/>
            <person name="Land M."/>
            <person name="Hauser L."/>
            <person name="Kyrpides N."/>
            <person name="Anderson I.J."/>
            <person name="Miller C."/>
            <person name="Richardson P."/>
        </authorList>
    </citation>
    <scope>NUCLEOTIDE SEQUENCE [LARGE SCALE GENOMIC DNA]</scope>
    <source>
        <strain>DSM 7251 / JCM 13017 / BCRC 16820 / KCTC 9966 / NRRL B-24157 / PYR-1</strain>
    </source>
</reference>
<keyword id="KW-0001">2Fe-2S</keyword>
<keyword id="KW-0004">4Fe-4S</keyword>
<keyword id="KW-0093">Biotin biosynthesis</keyword>
<keyword id="KW-0408">Iron</keyword>
<keyword id="KW-0411">Iron-sulfur</keyword>
<keyword id="KW-0479">Metal-binding</keyword>
<keyword id="KW-0949">S-adenosyl-L-methionine</keyword>
<keyword id="KW-0808">Transferase</keyword>
<organism>
    <name type="scientific">Mycolicibacterium vanbaalenii (strain DSM 7251 / JCM 13017 / BCRC 16820 / KCTC 9966 / NRRL B-24157 / PYR-1)</name>
    <name type="common">Mycobacterium vanbaalenii</name>
    <dbReference type="NCBI Taxonomy" id="350058"/>
    <lineage>
        <taxon>Bacteria</taxon>
        <taxon>Bacillati</taxon>
        <taxon>Actinomycetota</taxon>
        <taxon>Actinomycetes</taxon>
        <taxon>Mycobacteriales</taxon>
        <taxon>Mycobacteriaceae</taxon>
        <taxon>Mycolicibacterium</taxon>
    </lineage>
</organism>
<proteinExistence type="inferred from homology"/>
<gene>
    <name evidence="1" type="primary">bioB</name>
    <name type="ordered locus">Mvan_2793</name>
</gene>
<name>BIOB_MYCVP</name>
<sequence length="331" mass="35880">MTDILAVAREQVLVRGEGLDQDQTLQVLQLPDDRLDDLLALAHEVRMAWCGPDVEVEGIISLKTGGCPEDCHFCSQSGLFASPVRSAWLDIPSLVEAAKQTAKTGATEFCIVAAVRGPDERLLAQVAAGIEAIRNEVDIQIACSLGMLTQDQVERLSEMGVHRYNHNLETARSFFTNVVTTHSWEERWDTLQMVREAGMEVCCGGILGMGETLEQRAEFAANLAELDPHEVPLNFLNPRPGTPFGDLEVLPASEALKAVAAFRLALPRTMLRFAGGREITLGDLGAKQGILGGINAVIVGNYLTTLGRPAEADLQLLDDLQMPIKALNATL</sequence>
<evidence type="ECO:0000255" key="1">
    <source>
        <dbReference type="HAMAP-Rule" id="MF_01694"/>
    </source>
</evidence>
<evidence type="ECO:0000255" key="2">
    <source>
        <dbReference type="PROSITE-ProRule" id="PRU01266"/>
    </source>
</evidence>
<protein>
    <recommendedName>
        <fullName evidence="1">Biotin synthase</fullName>
        <ecNumber evidence="1">2.8.1.6</ecNumber>
    </recommendedName>
</protein>
<dbReference type="EC" id="2.8.1.6" evidence="1"/>
<dbReference type="EMBL" id="CP000511">
    <property type="protein sequence ID" value="ABM13600.1"/>
    <property type="molecule type" value="Genomic_DNA"/>
</dbReference>
<dbReference type="RefSeq" id="WP_011780008.1">
    <property type="nucleotide sequence ID" value="NZ_JACKSD010000326.1"/>
</dbReference>
<dbReference type="SMR" id="A1T8V0"/>
<dbReference type="STRING" id="350058.Mvan_2793"/>
<dbReference type="KEGG" id="mva:Mvan_2793"/>
<dbReference type="eggNOG" id="COG0502">
    <property type="taxonomic scope" value="Bacteria"/>
</dbReference>
<dbReference type="HOGENOM" id="CLU_033172_2_1_11"/>
<dbReference type="UniPathway" id="UPA00078">
    <property type="reaction ID" value="UER00162"/>
</dbReference>
<dbReference type="Proteomes" id="UP000009159">
    <property type="component" value="Chromosome"/>
</dbReference>
<dbReference type="GO" id="GO:0051537">
    <property type="term" value="F:2 iron, 2 sulfur cluster binding"/>
    <property type="evidence" value="ECO:0007669"/>
    <property type="project" value="UniProtKB-KW"/>
</dbReference>
<dbReference type="GO" id="GO:0051539">
    <property type="term" value="F:4 iron, 4 sulfur cluster binding"/>
    <property type="evidence" value="ECO:0007669"/>
    <property type="project" value="UniProtKB-KW"/>
</dbReference>
<dbReference type="GO" id="GO:0004076">
    <property type="term" value="F:biotin synthase activity"/>
    <property type="evidence" value="ECO:0007669"/>
    <property type="project" value="UniProtKB-UniRule"/>
</dbReference>
<dbReference type="GO" id="GO:0005506">
    <property type="term" value="F:iron ion binding"/>
    <property type="evidence" value="ECO:0007669"/>
    <property type="project" value="UniProtKB-UniRule"/>
</dbReference>
<dbReference type="GO" id="GO:0009102">
    <property type="term" value="P:biotin biosynthetic process"/>
    <property type="evidence" value="ECO:0007669"/>
    <property type="project" value="UniProtKB-UniRule"/>
</dbReference>
<dbReference type="CDD" id="cd01335">
    <property type="entry name" value="Radical_SAM"/>
    <property type="match status" value="1"/>
</dbReference>
<dbReference type="FunFam" id="3.20.20.70:FF:000026">
    <property type="entry name" value="Biotin synthase"/>
    <property type="match status" value="1"/>
</dbReference>
<dbReference type="Gene3D" id="3.20.20.70">
    <property type="entry name" value="Aldolase class I"/>
    <property type="match status" value="1"/>
</dbReference>
<dbReference type="HAMAP" id="MF_01694">
    <property type="entry name" value="BioB"/>
    <property type="match status" value="1"/>
</dbReference>
<dbReference type="InterPro" id="IPR013785">
    <property type="entry name" value="Aldolase_TIM"/>
</dbReference>
<dbReference type="InterPro" id="IPR010722">
    <property type="entry name" value="BATS_dom"/>
</dbReference>
<dbReference type="InterPro" id="IPR002684">
    <property type="entry name" value="Biotin_synth/BioAB"/>
</dbReference>
<dbReference type="InterPro" id="IPR024177">
    <property type="entry name" value="Biotin_synthase"/>
</dbReference>
<dbReference type="InterPro" id="IPR006638">
    <property type="entry name" value="Elp3/MiaA/NifB-like_rSAM"/>
</dbReference>
<dbReference type="InterPro" id="IPR007197">
    <property type="entry name" value="rSAM"/>
</dbReference>
<dbReference type="NCBIfam" id="TIGR00433">
    <property type="entry name" value="bioB"/>
    <property type="match status" value="1"/>
</dbReference>
<dbReference type="PANTHER" id="PTHR22976">
    <property type="entry name" value="BIOTIN SYNTHASE"/>
    <property type="match status" value="1"/>
</dbReference>
<dbReference type="PANTHER" id="PTHR22976:SF2">
    <property type="entry name" value="BIOTIN SYNTHASE, MITOCHONDRIAL"/>
    <property type="match status" value="1"/>
</dbReference>
<dbReference type="Pfam" id="PF06968">
    <property type="entry name" value="BATS"/>
    <property type="match status" value="1"/>
</dbReference>
<dbReference type="Pfam" id="PF04055">
    <property type="entry name" value="Radical_SAM"/>
    <property type="match status" value="1"/>
</dbReference>
<dbReference type="PIRSF" id="PIRSF001619">
    <property type="entry name" value="Biotin_synth"/>
    <property type="match status" value="1"/>
</dbReference>
<dbReference type="SFLD" id="SFLDG01060">
    <property type="entry name" value="BATS_domain_containing"/>
    <property type="match status" value="1"/>
</dbReference>
<dbReference type="SFLD" id="SFLDG01278">
    <property type="entry name" value="biotin_synthase_like"/>
    <property type="match status" value="1"/>
</dbReference>
<dbReference type="SMART" id="SM00876">
    <property type="entry name" value="BATS"/>
    <property type="match status" value="1"/>
</dbReference>
<dbReference type="SMART" id="SM00729">
    <property type="entry name" value="Elp3"/>
    <property type="match status" value="1"/>
</dbReference>
<dbReference type="SUPFAM" id="SSF102114">
    <property type="entry name" value="Radical SAM enzymes"/>
    <property type="match status" value="1"/>
</dbReference>
<dbReference type="PROSITE" id="PS51918">
    <property type="entry name" value="RADICAL_SAM"/>
    <property type="match status" value="1"/>
</dbReference>